<reference key="1">
    <citation type="journal article" date="2007" name="Genome Res.">
        <title>Genome characteristics of facultatively symbiotic Frankia sp. strains reflect host range and host plant biogeography.</title>
        <authorList>
            <person name="Normand P."/>
            <person name="Lapierre P."/>
            <person name="Tisa L.S."/>
            <person name="Gogarten J.P."/>
            <person name="Alloisio N."/>
            <person name="Bagnarol E."/>
            <person name="Bassi C.A."/>
            <person name="Berry A.M."/>
            <person name="Bickhart D.M."/>
            <person name="Choisne N."/>
            <person name="Couloux A."/>
            <person name="Cournoyer B."/>
            <person name="Cruveiller S."/>
            <person name="Daubin V."/>
            <person name="Demange N."/>
            <person name="Francino M.P."/>
            <person name="Goltsman E."/>
            <person name="Huang Y."/>
            <person name="Kopp O.R."/>
            <person name="Labarre L."/>
            <person name="Lapidus A."/>
            <person name="Lavire C."/>
            <person name="Marechal J."/>
            <person name="Martinez M."/>
            <person name="Mastronunzio J.E."/>
            <person name="Mullin B.C."/>
            <person name="Niemann J."/>
            <person name="Pujic P."/>
            <person name="Rawnsley T."/>
            <person name="Rouy Z."/>
            <person name="Schenowitz C."/>
            <person name="Sellstedt A."/>
            <person name="Tavares F."/>
            <person name="Tomkins J.P."/>
            <person name="Vallenet D."/>
            <person name="Valverde C."/>
            <person name="Wall L.G."/>
            <person name="Wang Y."/>
            <person name="Medigue C."/>
            <person name="Benson D.R."/>
        </authorList>
    </citation>
    <scope>NUCLEOTIDE SEQUENCE [LARGE SCALE GENOMIC DNA]</scope>
    <source>
        <strain>DSM 45818 / CECT 9043 / HFP020203 / CcI3</strain>
    </source>
</reference>
<proteinExistence type="inferred from homology"/>
<comment type="function">
    <text evidence="1">Binds the 23S rRNA.</text>
</comment>
<comment type="cofactor">
    <cofactor evidence="1">
        <name>Zn(2+)</name>
        <dbReference type="ChEBI" id="CHEBI:29105"/>
    </cofactor>
    <text evidence="1">Binds 1 zinc ion per subunit.</text>
</comment>
<comment type="subunit">
    <text evidence="1">Part of the 50S ribosomal subunit.</text>
</comment>
<comment type="similarity">
    <text evidence="1">Belongs to the bacterial ribosomal protein bL31 family. Type A subfamily.</text>
</comment>
<organism>
    <name type="scientific">Frankia casuarinae (strain DSM 45818 / CECT 9043 / HFP020203 / CcI3)</name>
    <dbReference type="NCBI Taxonomy" id="106370"/>
    <lineage>
        <taxon>Bacteria</taxon>
        <taxon>Bacillati</taxon>
        <taxon>Actinomycetota</taxon>
        <taxon>Actinomycetes</taxon>
        <taxon>Frankiales</taxon>
        <taxon>Frankiaceae</taxon>
        <taxon>Frankia</taxon>
    </lineage>
</organism>
<feature type="chain" id="PRO_0000259188" description="Large ribosomal subunit protein bL31">
    <location>
        <begin position="1"/>
        <end position="78"/>
    </location>
</feature>
<feature type="binding site" evidence="1">
    <location>
        <position position="16"/>
    </location>
    <ligand>
        <name>Zn(2+)</name>
        <dbReference type="ChEBI" id="CHEBI:29105"/>
    </ligand>
</feature>
<feature type="binding site" evidence="1">
    <location>
        <position position="18"/>
    </location>
    <ligand>
        <name>Zn(2+)</name>
        <dbReference type="ChEBI" id="CHEBI:29105"/>
    </ligand>
</feature>
<feature type="binding site" evidence="1">
    <location>
        <position position="38"/>
    </location>
    <ligand>
        <name>Zn(2+)</name>
        <dbReference type="ChEBI" id="CHEBI:29105"/>
    </ligand>
</feature>
<feature type="binding site" evidence="1">
    <location>
        <position position="41"/>
    </location>
    <ligand>
        <name>Zn(2+)</name>
        <dbReference type="ChEBI" id="CHEBI:29105"/>
    </ligand>
</feature>
<keyword id="KW-0479">Metal-binding</keyword>
<keyword id="KW-1185">Reference proteome</keyword>
<keyword id="KW-0687">Ribonucleoprotein</keyword>
<keyword id="KW-0689">Ribosomal protein</keyword>
<keyword id="KW-0694">RNA-binding</keyword>
<keyword id="KW-0699">rRNA-binding</keyword>
<keyword id="KW-0862">Zinc</keyword>
<protein>
    <recommendedName>
        <fullName evidence="1">Large ribosomal subunit protein bL31</fullName>
    </recommendedName>
    <alternativeName>
        <fullName evidence="2">50S ribosomal protein L31</fullName>
    </alternativeName>
</protein>
<dbReference type="EMBL" id="CP000249">
    <property type="protein sequence ID" value="ABD13073.1"/>
    <property type="molecule type" value="Genomic_DNA"/>
</dbReference>
<dbReference type="RefSeq" id="WP_011438097.1">
    <property type="nucleotide sequence ID" value="NZ_MSEA01000451.1"/>
</dbReference>
<dbReference type="SMR" id="Q2J6L9"/>
<dbReference type="STRING" id="106370.Francci3_3721"/>
<dbReference type="KEGG" id="fra:Francci3_3721"/>
<dbReference type="eggNOG" id="COG0254">
    <property type="taxonomic scope" value="Bacteria"/>
</dbReference>
<dbReference type="HOGENOM" id="CLU_114306_4_3_11"/>
<dbReference type="PhylomeDB" id="Q2J6L9"/>
<dbReference type="Proteomes" id="UP000001937">
    <property type="component" value="Chromosome"/>
</dbReference>
<dbReference type="GO" id="GO:1990904">
    <property type="term" value="C:ribonucleoprotein complex"/>
    <property type="evidence" value="ECO:0007669"/>
    <property type="project" value="UniProtKB-KW"/>
</dbReference>
<dbReference type="GO" id="GO:0005840">
    <property type="term" value="C:ribosome"/>
    <property type="evidence" value="ECO:0007669"/>
    <property type="project" value="UniProtKB-KW"/>
</dbReference>
<dbReference type="GO" id="GO:0046872">
    <property type="term" value="F:metal ion binding"/>
    <property type="evidence" value="ECO:0007669"/>
    <property type="project" value="UniProtKB-KW"/>
</dbReference>
<dbReference type="GO" id="GO:0019843">
    <property type="term" value="F:rRNA binding"/>
    <property type="evidence" value="ECO:0007669"/>
    <property type="project" value="UniProtKB-KW"/>
</dbReference>
<dbReference type="GO" id="GO:0003735">
    <property type="term" value="F:structural constituent of ribosome"/>
    <property type="evidence" value="ECO:0007669"/>
    <property type="project" value="InterPro"/>
</dbReference>
<dbReference type="GO" id="GO:0006412">
    <property type="term" value="P:translation"/>
    <property type="evidence" value="ECO:0007669"/>
    <property type="project" value="UniProtKB-UniRule"/>
</dbReference>
<dbReference type="Gene3D" id="4.10.830.30">
    <property type="entry name" value="Ribosomal protein L31"/>
    <property type="match status" value="1"/>
</dbReference>
<dbReference type="HAMAP" id="MF_00501">
    <property type="entry name" value="Ribosomal_bL31_1"/>
    <property type="match status" value="1"/>
</dbReference>
<dbReference type="InterPro" id="IPR034704">
    <property type="entry name" value="Ribosomal_bL28/bL31-like_sf"/>
</dbReference>
<dbReference type="InterPro" id="IPR002150">
    <property type="entry name" value="Ribosomal_bL31"/>
</dbReference>
<dbReference type="InterPro" id="IPR027491">
    <property type="entry name" value="Ribosomal_bL31_A"/>
</dbReference>
<dbReference type="InterPro" id="IPR042105">
    <property type="entry name" value="Ribosomal_bL31_sf"/>
</dbReference>
<dbReference type="NCBIfam" id="TIGR00105">
    <property type="entry name" value="L31"/>
    <property type="match status" value="1"/>
</dbReference>
<dbReference type="NCBIfam" id="NF000612">
    <property type="entry name" value="PRK00019.1"/>
    <property type="match status" value="1"/>
</dbReference>
<dbReference type="NCBIfam" id="NF001809">
    <property type="entry name" value="PRK00528.1"/>
    <property type="match status" value="1"/>
</dbReference>
<dbReference type="PANTHER" id="PTHR33280">
    <property type="entry name" value="50S RIBOSOMAL PROTEIN L31, CHLOROPLASTIC"/>
    <property type="match status" value="1"/>
</dbReference>
<dbReference type="PANTHER" id="PTHR33280:SF1">
    <property type="entry name" value="LARGE RIBOSOMAL SUBUNIT PROTEIN BL31C"/>
    <property type="match status" value="1"/>
</dbReference>
<dbReference type="Pfam" id="PF01197">
    <property type="entry name" value="Ribosomal_L31"/>
    <property type="match status" value="1"/>
</dbReference>
<dbReference type="PRINTS" id="PR01249">
    <property type="entry name" value="RIBOSOMALL31"/>
</dbReference>
<dbReference type="SUPFAM" id="SSF143800">
    <property type="entry name" value="L28p-like"/>
    <property type="match status" value="1"/>
</dbReference>
<dbReference type="PROSITE" id="PS01143">
    <property type="entry name" value="RIBOSOMAL_L31"/>
    <property type="match status" value="1"/>
</dbReference>
<accession>Q2J6L9</accession>
<gene>
    <name evidence="1" type="primary">rpmE</name>
    <name type="ordered locus">Francci3_3721</name>
</gene>
<name>RL31_FRACC</name>
<sequence length="78" mass="8731">MKPDVHPTYHETTVTCTCGNTFTTRSTKENGVVNAEVCSQCHPFYTGKQKILDVGGRVEKFERRFGRRRPGEKVGGAK</sequence>
<evidence type="ECO:0000255" key="1">
    <source>
        <dbReference type="HAMAP-Rule" id="MF_00501"/>
    </source>
</evidence>
<evidence type="ECO:0000305" key="2"/>